<protein>
    <recommendedName>
        <fullName>MAP kinase phosphatase with leucine-rich repeats protein 2</fullName>
        <ecNumber>3.1.3.16</ecNumber>
        <ecNumber>3.1.3.48</ecNumber>
    </recommendedName>
</protein>
<name>MPL2_DICDI</name>
<feature type="chain" id="PRO_0000332955" description="MAP kinase phosphatase with leucine-rich repeats protein 2">
    <location>
        <begin position="1"/>
        <end position="695"/>
    </location>
</feature>
<feature type="repeat" description="LRR 1">
    <location>
        <begin position="101"/>
        <end position="122"/>
    </location>
</feature>
<feature type="repeat" description="LRR 2">
    <location>
        <begin position="124"/>
        <end position="145"/>
    </location>
</feature>
<feature type="repeat" description="LRR 3">
    <location>
        <begin position="147"/>
        <end position="167"/>
    </location>
</feature>
<feature type="repeat" description="LRR 4">
    <location>
        <begin position="170"/>
        <end position="191"/>
    </location>
</feature>
<feature type="repeat" description="LRR 5">
    <location>
        <begin position="193"/>
        <end position="214"/>
    </location>
</feature>
<feature type="repeat" description="LRR 6">
    <location>
        <begin position="215"/>
        <end position="235"/>
    </location>
</feature>
<feature type="repeat" description="LRR 7">
    <location>
        <begin position="239"/>
        <end position="260"/>
    </location>
</feature>
<feature type="repeat" description="LRR 8">
    <location>
        <begin position="262"/>
        <end position="283"/>
    </location>
</feature>
<feature type="repeat" description="LRR 9">
    <location>
        <begin position="286"/>
        <end position="307"/>
    </location>
</feature>
<feature type="repeat" description="LRR 10">
    <location>
        <begin position="309"/>
        <end position="330"/>
    </location>
</feature>
<feature type="domain" description="Tyrosine-protein phosphatase" evidence="2">
    <location>
        <begin position="556"/>
        <end position="695"/>
    </location>
</feature>
<feature type="region of interest" description="Disordered" evidence="4">
    <location>
        <begin position="413"/>
        <end position="438"/>
    </location>
</feature>
<feature type="region of interest" description="Disordered" evidence="4">
    <location>
        <begin position="492"/>
        <end position="519"/>
    </location>
</feature>
<feature type="compositionally biased region" description="Low complexity" evidence="4">
    <location>
        <begin position="413"/>
        <end position="426"/>
    </location>
</feature>
<feature type="active site" description="Phosphocysteine intermediate" evidence="2">
    <location>
        <position position="639"/>
    </location>
</feature>
<accession>Q55CS8</accession>
<evidence type="ECO:0000250" key="1"/>
<evidence type="ECO:0000255" key="2">
    <source>
        <dbReference type="PROSITE-ProRule" id="PRU00160"/>
    </source>
</evidence>
<evidence type="ECO:0000255" key="3">
    <source>
        <dbReference type="PROSITE-ProRule" id="PRU10044"/>
    </source>
</evidence>
<evidence type="ECO:0000256" key="4">
    <source>
        <dbReference type="SAM" id="MobiDB-lite"/>
    </source>
</evidence>
<evidence type="ECO:0000305" key="5"/>
<organism>
    <name type="scientific">Dictyostelium discoideum</name>
    <name type="common">Social amoeba</name>
    <dbReference type="NCBI Taxonomy" id="44689"/>
    <lineage>
        <taxon>Eukaryota</taxon>
        <taxon>Amoebozoa</taxon>
        <taxon>Evosea</taxon>
        <taxon>Eumycetozoa</taxon>
        <taxon>Dictyostelia</taxon>
        <taxon>Dictyosteliales</taxon>
        <taxon>Dictyosteliaceae</taxon>
        <taxon>Dictyostelium</taxon>
    </lineage>
</organism>
<keyword id="KW-0378">Hydrolase</keyword>
<keyword id="KW-0433">Leucine-rich repeat</keyword>
<keyword id="KW-0904">Protein phosphatase</keyword>
<keyword id="KW-1185">Reference proteome</keyword>
<keyword id="KW-0677">Repeat</keyword>
<gene>
    <name type="primary">mpl2</name>
    <name type="ORF">DDB_G0270688</name>
</gene>
<comment type="function">
    <text evidence="1">Probable phosphatase with dual specificity toward Ser/Thr and Tyr-containing proteins.</text>
</comment>
<comment type="catalytic activity">
    <reaction evidence="3">
        <text>O-phospho-L-tyrosyl-[protein] + H2O = L-tyrosyl-[protein] + phosphate</text>
        <dbReference type="Rhea" id="RHEA:10684"/>
        <dbReference type="Rhea" id="RHEA-COMP:10136"/>
        <dbReference type="Rhea" id="RHEA-COMP:20101"/>
        <dbReference type="ChEBI" id="CHEBI:15377"/>
        <dbReference type="ChEBI" id="CHEBI:43474"/>
        <dbReference type="ChEBI" id="CHEBI:46858"/>
        <dbReference type="ChEBI" id="CHEBI:61978"/>
        <dbReference type="EC" id="3.1.3.48"/>
    </reaction>
</comment>
<comment type="catalytic activity">
    <reaction>
        <text>O-phospho-L-seryl-[protein] + H2O = L-seryl-[protein] + phosphate</text>
        <dbReference type="Rhea" id="RHEA:20629"/>
        <dbReference type="Rhea" id="RHEA-COMP:9863"/>
        <dbReference type="Rhea" id="RHEA-COMP:11604"/>
        <dbReference type="ChEBI" id="CHEBI:15377"/>
        <dbReference type="ChEBI" id="CHEBI:29999"/>
        <dbReference type="ChEBI" id="CHEBI:43474"/>
        <dbReference type="ChEBI" id="CHEBI:83421"/>
        <dbReference type="EC" id="3.1.3.16"/>
    </reaction>
</comment>
<comment type="catalytic activity">
    <reaction>
        <text>O-phospho-L-threonyl-[protein] + H2O = L-threonyl-[protein] + phosphate</text>
        <dbReference type="Rhea" id="RHEA:47004"/>
        <dbReference type="Rhea" id="RHEA-COMP:11060"/>
        <dbReference type="Rhea" id="RHEA-COMP:11605"/>
        <dbReference type="ChEBI" id="CHEBI:15377"/>
        <dbReference type="ChEBI" id="CHEBI:30013"/>
        <dbReference type="ChEBI" id="CHEBI:43474"/>
        <dbReference type="ChEBI" id="CHEBI:61977"/>
        <dbReference type="EC" id="3.1.3.16"/>
    </reaction>
</comment>
<comment type="similarity">
    <text evidence="5">Belongs to the protein-tyrosine phosphatase family. Non-receptor class dual specificity subfamily.</text>
</comment>
<sequence length="695" mass="79425">MFLKKLLKGSSNSTRPRGATFNGIYTGGDNLSGSSEQNYNNSLTTSTKQTNRQTLLLKSMEYINGSSTYYGNYMDYFDIPVQLFVGGEQSEIYPMLSYNQSLKSLILDFNKITEIPDCITLLPNLNHLSLAANQLTHVPEFLSQLKSLETFEIGINQFTCFPLNVCKIKSLTSLHLETNNIKSLPEEFLNLVNLKDLSLFDNQLKEIPDSLPNNIEKLNLGCNDISSSKSDSLIRISHSLTTLNLSENKIEELDESLSCLVNVKTLMLDCNMIKVIPGSVLGSWKSLVTLNLPHNLISDLPPEVILLSNLRIIDLRGNNFENCKKLIPTESSTPISFKIEDFIQNKERINSLKFDNIEILPTTNSIINSNNNNYEVITTTATTKNIIENKEDNDEKLLNNSTISIVLDSNNKSENNEINENNQLLTTDDDYNTDKNDSFTESEDIIKKIQIELDSIEIQQKQLLLKQIKLKEKMKKEKNKLFKFQQQEIIHQEQLPQSKPENEKLTNIPEQQQKQQQQQQQQEVQQPIITLTKSTSSKVEVEMIVPNQLIFWQSIVPDLIIDKLYLGCRECAMNKSWLKDNNVTHILTVANFKPLYPDLFKYLIINIEDVDEANIYQHFKEMNAFIDEGREKGGVLIHCRAGVSRSASATMAFIMMKNSLKFQEAFDITIKGRPRIYPNIGFINQLKKFEKDLFK</sequence>
<dbReference type="EC" id="3.1.3.16"/>
<dbReference type="EC" id="3.1.3.48"/>
<dbReference type="EMBL" id="AAFI02000005">
    <property type="protein sequence ID" value="EAL72694.2"/>
    <property type="molecule type" value="Genomic_DNA"/>
</dbReference>
<dbReference type="RefSeq" id="XP_646403.2">
    <property type="nucleotide sequence ID" value="XM_641311.2"/>
</dbReference>
<dbReference type="SMR" id="Q55CS8"/>
<dbReference type="FunCoup" id="Q55CS8">
    <property type="interactions" value="621"/>
</dbReference>
<dbReference type="STRING" id="44689.Q55CS8"/>
<dbReference type="PaxDb" id="44689-DDB0238870"/>
<dbReference type="EnsemblProtists" id="EAL72694">
    <property type="protein sequence ID" value="EAL72694"/>
    <property type="gene ID" value="DDB_G0270688"/>
</dbReference>
<dbReference type="GeneID" id="8617359"/>
<dbReference type="KEGG" id="ddi:DDB_G0270688"/>
<dbReference type="dictyBase" id="DDB_G0270688">
    <property type="gene designation" value="mpl2"/>
</dbReference>
<dbReference type="VEuPathDB" id="AmoebaDB:DDB_G0270688"/>
<dbReference type="eggNOG" id="KOG0619">
    <property type="taxonomic scope" value="Eukaryota"/>
</dbReference>
<dbReference type="eggNOG" id="KOG1716">
    <property type="taxonomic scope" value="Eukaryota"/>
</dbReference>
<dbReference type="HOGENOM" id="CLU_396611_0_0_1"/>
<dbReference type="InParanoid" id="Q55CS8"/>
<dbReference type="OMA" id="SFFNYKV"/>
<dbReference type="PhylomeDB" id="Q55CS8"/>
<dbReference type="Reactome" id="R-DDI-112409">
    <property type="pathway name" value="RAF-independent MAPK1/3 activation"/>
</dbReference>
<dbReference type="Reactome" id="R-DDI-202670">
    <property type="pathway name" value="ERKs are inactivated"/>
</dbReference>
<dbReference type="Reactome" id="R-DDI-5675221">
    <property type="pathway name" value="Negative regulation of MAPK pathway"/>
</dbReference>
<dbReference type="PRO" id="PR:Q55CS8"/>
<dbReference type="Proteomes" id="UP000002195">
    <property type="component" value="Chromosome 1"/>
</dbReference>
<dbReference type="GO" id="GO:0005737">
    <property type="term" value="C:cytoplasm"/>
    <property type="evidence" value="ECO:0000318"/>
    <property type="project" value="GO_Central"/>
</dbReference>
<dbReference type="GO" id="GO:0004721">
    <property type="term" value="F:phosphoprotein phosphatase activity"/>
    <property type="evidence" value="ECO:0000318"/>
    <property type="project" value="GO_Central"/>
</dbReference>
<dbReference type="GO" id="GO:0004722">
    <property type="term" value="F:protein serine/threonine phosphatase activity"/>
    <property type="evidence" value="ECO:0007669"/>
    <property type="project" value="UniProtKB-EC"/>
</dbReference>
<dbReference type="GO" id="GO:0004725">
    <property type="term" value="F:protein tyrosine phosphatase activity"/>
    <property type="evidence" value="ECO:0007669"/>
    <property type="project" value="UniProtKB-EC"/>
</dbReference>
<dbReference type="GO" id="GO:0043409">
    <property type="term" value="P:negative regulation of MAPK cascade"/>
    <property type="evidence" value="ECO:0000318"/>
    <property type="project" value="GO_Central"/>
</dbReference>
<dbReference type="GO" id="GO:0007165">
    <property type="term" value="P:signal transduction"/>
    <property type="evidence" value="ECO:0000318"/>
    <property type="project" value="GO_Central"/>
</dbReference>
<dbReference type="CDD" id="cd14498">
    <property type="entry name" value="DSP"/>
    <property type="match status" value="1"/>
</dbReference>
<dbReference type="FunFam" id="3.90.190.10:FF:000133">
    <property type="entry name" value="Leucine rich repeat and phosphatase domain containing protein"/>
    <property type="match status" value="1"/>
</dbReference>
<dbReference type="FunFam" id="3.80.10.10:FF:001886">
    <property type="entry name" value="MAP kinase phosphatase with leucine-rich repeats protein 2"/>
    <property type="match status" value="1"/>
</dbReference>
<dbReference type="Gene3D" id="3.90.190.10">
    <property type="entry name" value="Protein tyrosine phosphatase superfamily"/>
    <property type="match status" value="1"/>
</dbReference>
<dbReference type="Gene3D" id="3.80.10.10">
    <property type="entry name" value="Ribonuclease Inhibitor"/>
    <property type="match status" value="1"/>
</dbReference>
<dbReference type="InterPro" id="IPR000340">
    <property type="entry name" value="Dual-sp_phosphatase_cat-dom"/>
</dbReference>
<dbReference type="InterPro" id="IPR001611">
    <property type="entry name" value="Leu-rich_rpt"/>
</dbReference>
<dbReference type="InterPro" id="IPR003591">
    <property type="entry name" value="Leu-rich_rpt_typical-subtyp"/>
</dbReference>
<dbReference type="InterPro" id="IPR032675">
    <property type="entry name" value="LRR_dom_sf"/>
</dbReference>
<dbReference type="InterPro" id="IPR029021">
    <property type="entry name" value="Prot-tyrosine_phosphatase-like"/>
</dbReference>
<dbReference type="InterPro" id="IPR016130">
    <property type="entry name" value="Tyr_Pase_AS"/>
</dbReference>
<dbReference type="InterPro" id="IPR000387">
    <property type="entry name" value="Tyr_Pase_dom"/>
</dbReference>
<dbReference type="InterPro" id="IPR020422">
    <property type="entry name" value="TYR_PHOSPHATASE_DUAL_dom"/>
</dbReference>
<dbReference type="PANTHER" id="PTHR10159">
    <property type="entry name" value="DUAL SPECIFICITY PROTEIN PHOSPHATASE"/>
    <property type="match status" value="1"/>
</dbReference>
<dbReference type="PANTHER" id="PTHR10159:SF515">
    <property type="entry name" value="MAP KINASE PHOSPHATASE WITH LEUCINE-RICH REPEATS PROTEIN 1-RELATED"/>
    <property type="match status" value="1"/>
</dbReference>
<dbReference type="Pfam" id="PF00782">
    <property type="entry name" value="DSPc"/>
    <property type="match status" value="1"/>
</dbReference>
<dbReference type="Pfam" id="PF00560">
    <property type="entry name" value="LRR_1"/>
    <property type="match status" value="1"/>
</dbReference>
<dbReference type="Pfam" id="PF13855">
    <property type="entry name" value="LRR_8"/>
    <property type="match status" value="2"/>
</dbReference>
<dbReference type="SMART" id="SM00195">
    <property type="entry name" value="DSPc"/>
    <property type="match status" value="1"/>
</dbReference>
<dbReference type="SMART" id="SM00364">
    <property type="entry name" value="LRR_BAC"/>
    <property type="match status" value="5"/>
</dbReference>
<dbReference type="SMART" id="SM00369">
    <property type="entry name" value="LRR_TYP"/>
    <property type="match status" value="7"/>
</dbReference>
<dbReference type="SUPFAM" id="SSF52799">
    <property type="entry name" value="(Phosphotyrosine protein) phosphatases II"/>
    <property type="match status" value="1"/>
</dbReference>
<dbReference type="SUPFAM" id="SSF52058">
    <property type="entry name" value="L domain-like"/>
    <property type="match status" value="1"/>
</dbReference>
<dbReference type="PROSITE" id="PS51450">
    <property type="entry name" value="LRR"/>
    <property type="match status" value="9"/>
</dbReference>
<dbReference type="PROSITE" id="PS00383">
    <property type="entry name" value="TYR_PHOSPHATASE_1"/>
    <property type="match status" value="1"/>
</dbReference>
<dbReference type="PROSITE" id="PS50056">
    <property type="entry name" value="TYR_PHOSPHATASE_2"/>
    <property type="match status" value="1"/>
</dbReference>
<dbReference type="PROSITE" id="PS50054">
    <property type="entry name" value="TYR_PHOSPHATASE_DUAL"/>
    <property type="match status" value="1"/>
</dbReference>
<reference key="1">
    <citation type="journal article" date="2005" name="Nature">
        <title>The genome of the social amoeba Dictyostelium discoideum.</title>
        <authorList>
            <person name="Eichinger L."/>
            <person name="Pachebat J.A."/>
            <person name="Gloeckner G."/>
            <person name="Rajandream M.A."/>
            <person name="Sucgang R."/>
            <person name="Berriman M."/>
            <person name="Song J."/>
            <person name="Olsen R."/>
            <person name="Szafranski K."/>
            <person name="Xu Q."/>
            <person name="Tunggal B."/>
            <person name="Kummerfeld S."/>
            <person name="Madera M."/>
            <person name="Konfortov B.A."/>
            <person name="Rivero F."/>
            <person name="Bankier A.T."/>
            <person name="Lehmann R."/>
            <person name="Hamlin N."/>
            <person name="Davies R."/>
            <person name="Gaudet P."/>
            <person name="Fey P."/>
            <person name="Pilcher K."/>
            <person name="Chen G."/>
            <person name="Saunders D."/>
            <person name="Sodergren E.J."/>
            <person name="Davis P."/>
            <person name="Kerhornou A."/>
            <person name="Nie X."/>
            <person name="Hall N."/>
            <person name="Anjard C."/>
            <person name="Hemphill L."/>
            <person name="Bason N."/>
            <person name="Farbrother P."/>
            <person name="Desany B."/>
            <person name="Just E."/>
            <person name="Morio T."/>
            <person name="Rost R."/>
            <person name="Churcher C.M."/>
            <person name="Cooper J."/>
            <person name="Haydock S."/>
            <person name="van Driessche N."/>
            <person name="Cronin A."/>
            <person name="Goodhead I."/>
            <person name="Muzny D.M."/>
            <person name="Mourier T."/>
            <person name="Pain A."/>
            <person name="Lu M."/>
            <person name="Harper D."/>
            <person name="Lindsay R."/>
            <person name="Hauser H."/>
            <person name="James K.D."/>
            <person name="Quiles M."/>
            <person name="Madan Babu M."/>
            <person name="Saito T."/>
            <person name="Buchrieser C."/>
            <person name="Wardroper A."/>
            <person name="Felder M."/>
            <person name="Thangavelu M."/>
            <person name="Johnson D."/>
            <person name="Knights A."/>
            <person name="Loulseged H."/>
            <person name="Mungall K.L."/>
            <person name="Oliver K."/>
            <person name="Price C."/>
            <person name="Quail M.A."/>
            <person name="Urushihara H."/>
            <person name="Hernandez J."/>
            <person name="Rabbinowitsch E."/>
            <person name="Steffen D."/>
            <person name="Sanders M."/>
            <person name="Ma J."/>
            <person name="Kohara Y."/>
            <person name="Sharp S."/>
            <person name="Simmonds M.N."/>
            <person name="Spiegler S."/>
            <person name="Tivey A."/>
            <person name="Sugano S."/>
            <person name="White B."/>
            <person name="Walker D."/>
            <person name="Woodward J.R."/>
            <person name="Winckler T."/>
            <person name="Tanaka Y."/>
            <person name="Shaulsky G."/>
            <person name="Schleicher M."/>
            <person name="Weinstock G.M."/>
            <person name="Rosenthal A."/>
            <person name="Cox E.C."/>
            <person name="Chisholm R.L."/>
            <person name="Gibbs R.A."/>
            <person name="Loomis W.F."/>
            <person name="Platzer M."/>
            <person name="Kay R.R."/>
            <person name="Williams J.G."/>
            <person name="Dear P.H."/>
            <person name="Noegel A.A."/>
            <person name="Barrell B.G."/>
            <person name="Kuspa A."/>
        </authorList>
    </citation>
    <scope>NUCLEOTIDE SEQUENCE [LARGE SCALE GENOMIC DNA]</scope>
    <source>
        <strain>AX4</strain>
    </source>
</reference>
<proteinExistence type="inferred from homology"/>